<name>CPHB_TRIV2</name>
<feature type="chain" id="PRO_0000209972" description="Cyanophycinase">
    <location>
        <begin position="1"/>
        <end position="298"/>
    </location>
</feature>
<feature type="active site" description="Charge relay system" evidence="1">
    <location>
        <position position="155"/>
    </location>
</feature>
<feature type="active site" description="Charge relay system" evidence="1">
    <location>
        <position position="173"/>
    </location>
</feature>
<feature type="active site" description="Charge relay system" evidence="1">
    <location>
        <position position="197"/>
    </location>
</feature>
<organism>
    <name type="scientific">Trichormus variabilis (strain ATCC 29413 / PCC 7937)</name>
    <name type="common">Anabaena variabilis</name>
    <dbReference type="NCBI Taxonomy" id="240292"/>
    <lineage>
        <taxon>Bacteria</taxon>
        <taxon>Bacillati</taxon>
        <taxon>Cyanobacteriota</taxon>
        <taxon>Cyanophyceae</taxon>
        <taxon>Nostocales</taxon>
        <taxon>Nostocaceae</taxon>
        <taxon>Trichormus</taxon>
    </lineage>
</organism>
<keyword id="KW-0378">Hydrolase</keyword>
<keyword id="KW-0645">Protease</keyword>
<keyword id="KW-0720">Serine protease</keyword>
<evidence type="ECO:0000250" key="1"/>
<evidence type="ECO:0000305" key="2"/>
<sequence length="298" mass="32391">MAPKVVDRRNTMPQLQAKSLEMRTPQATKTAVLVIGGAEDKVHGREILRTFFGRAGASKAYITIIPSASREPAIIGGRYIRIFEEMGAEKVEILDIREREQCESSQVRASLEACSGVFLTGGDQLRLCGVLSDTPVMEIIRQRVRGGQLTLAGTSAGAAVMGHHMIAGGGSGETPNRSLVDMATGLGLIPEVIVDQHFHNRNRMGRLISAVAAHPDRLGIGIDEDTCAVFERDGWLQVLGKGSVTIVDPTELTHTNEPHVGANEPLTVHNLRLHILSYGDRFHLYQRTVLPAVHRISS</sequence>
<gene>
    <name type="primary">cphB</name>
    <name type="ordered locus">Ava_1813</name>
</gene>
<reference key="1">
    <citation type="journal article" date="1998" name="Eur. J. Biochem.">
        <title>Molecular characterization of cyanophycin synthetase, the enzyme catalyzing the biosynthesis of the cyanobacterial reserve material multi-L-arginyl-poly-L-aspartate (cyanophycin).</title>
        <authorList>
            <person name="Ziegler K."/>
            <person name="Diener A."/>
            <person name="Herpin C."/>
            <person name="Richter R."/>
            <person name="Deutzmann R."/>
            <person name="Lockau W."/>
        </authorList>
    </citation>
    <scope>NUCLEOTIDE SEQUENCE [GENOMIC DNA]</scope>
</reference>
<reference key="2">
    <citation type="journal article" date="2014" name="Stand. Genomic Sci.">
        <title>Complete genome sequence of Anabaena variabilis ATCC 29413.</title>
        <authorList>
            <person name="Thiel T."/>
            <person name="Pratte B.S."/>
            <person name="Zhong J."/>
            <person name="Goodwin L."/>
            <person name="Copeland A."/>
            <person name="Lucas S."/>
            <person name="Han C."/>
            <person name="Pitluck S."/>
            <person name="Land M.L."/>
            <person name="Kyrpides N.C."/>
            <person name="Woyke T."/>
        </authorList>
    </citation>
    <scope>NUCLEOTIDE SEQUENCE [LARGE SCALE GENOMIC DNA]</scope>
    <source>
        <strain>ATCC 29413 / PCC 7937</strain>
    </source>
</reference>
<proteinExistence type="inferred from homology"/>
<comment type="function">
    <text>Exopeptidase that catalyzes the hydrolytic cleavage of multi-L-arginyl-poly-L-aspartic acid (cyanophycin; a water-insoluble reserve polymer) into aspartate-arginine dipeptides.</text>
</comment>
<comment type="catalytic activity">
    <reaction>
        <text>[L-4-(L-arginin-2-N-yl)aspartate](n) + H2O = [L-4-(L-arginin-2-N-yl)aspartate](n-1) + L-4-(L-arginin-2-N-yl)aspartate</text>
        <dbReference type="Rhea" id="RHEA:12845"/>
        <dbReference type="Rhea" id="RHEA-COMP:13728"/>
        <dbReference type="Rhea" id="RHEA-COMP:13734"/>
        <dbReference type="ChEBI" id="CHEBI:15377"/>
        <dbReference type="ChEBI" id="CHEBI:137986"/>
        <dbReference type="ChEBI" id="CHEBI:137991"/>
        <dbReference type="EC" id="3.4.15.6"/>
    </reaction>
</comment>
<comment type="similarity">
    <text evidence="2">Belongs to the peptidase S51 family.</text>
</comment>
<comment type="sequence caution" evidence="2">
    <conflict type="erroneous initiation">
        <sequence resource="EMBL-CDS" id="ABA21435"/>
    </conflict>
</comment>
<protein>
    <recommendedName>
        <fullName>Cyanophycinase</fullName>
        <ecNumber>3.4.15.6</ecNumber>
    </recommendedName>
</protein>
<dbReference type="EC" id="3.4.15.6"/>
<dbReference type="EMBL" id="AJ005201">
    <property type="protein sequence ID" value="CAA06439.1"/>
    <property type="molecule type" value="Genomic_DNA"/>
</dbReference>
<dbReference type="EMBL" id="CP000117">
    <property type="protein sequence ID" value="ABA21435.1"/>
    <property type="status" value="ALT_INIT"/>
    <property type="molecule type" value="Genomic_DNA"/>
</dbReference>
<dbReference type="SMR" id="O86108"/>
<dbReference type="STRING" id="240292.Ava_1813"/>
<dbReference type="KEGG" id="ava:Ava_1813"/>
<dbReference type="eggNOG" id="COG4242">
    <property type="taxonomic scope" value="Bacteria"/>
</dbReference>
<dbReference type="HOGENOM" id="CLU_053928_0_0_3"/>
<dbReference type="BRENDA" id="3.4.15.6">
    <property type="organism ID" value="322"/>
</dbReference>
<dbReference type="Proteomes" id="UP000002533">
    <property type="component" value="Chromosome"/>
</dbReference>
<dbReference type="GO" id="GO:0008241">
    <property type="term" value="F:peptidyl-dipeptidase activity"/>
    <property type="evidence" value="ECO:0007669"/>
    <property type="project" value="UniProtKB-EC"/>
</dbReference>
<dbReference type="GO" id="GO:0008236">
    <property type="term" value="F:serine-type peptidase activity"/>
    <property type="evidence" value="ECO:0007669"/>
    <property type="project" value="UniProtKB-KW"/>
</dbReference>
<dbReference type="GO" id="GO:0006508">
    <property type="term" value="P:proteolysis"/>
    <property type="evidence" value="ECO:0007669"/>
    <property type="project" value="UniProtKB-KW"/>
</dbReference>
<dbReference type="CDD" id="cd03145">
    <property type="entry name" value="GAT1_cyanophycinase"/>
    <property type="match status" value="1"/>
</dbReference>
<dbReference type="Gene3D" id="3.40.50.880">
    <property type="match status" value="1"/>
</dbReference>
<dbReference type="InterPro" id="IPR029062">
    <property type="entry name" value="Class_I_gatase-like"/>
</dbReference>
<dbReference type="InterPro" id="IPR005320">
    <property type="entry name" value="Peptidase_S51"/>
</dbReference>
<dbReference type="InterPro" id="IPR011811">
    <property type="entry name" value="Peptidase_S51_cyanophycinase"/>
</dbReference>
<dbReference type="NCBIfam" id="TIGR02069">
    <property type="entry name" value="cyanophycinase"/>
    <property type="match status" value="1"/>
</dbReference>
<dbReference type="PANTHER" id="PTHR36175">
    <property type="entry name" value="CYANOPHYCINASE"/>
    <property type="match status" value="1"/>
</dbReference>
<dbReference type="PANTHER" id="PTHR36175:SF1">
    <property type="entry name" value="CYANOPHYCINASE"/>
    <property type="match status" value="1"/>
</dbReference>
<dbReference type="Pfam" id="PF03575">
    <property type="entry name" value="Peptidase_S51"/>
    <property type="match status" value="1"/>
</dbReference>
<dbReference type="PIRSF" id="PIRSF032067">
    <property type="entry name" value="Cyanophycinase"/>
    <property type="match status" value="1"/>
</dbReference>
<dbReference type="SUPFAM" id="SSF52317">
    <property type="entry name" value="Class I glutamine amidotransferase-like"/>
    <property type="match status" value="1"/>
</dbReference>
<accession>O86108</accession>
<accession>Q3MC51</accession>